<organism>
    <name type="scientific">Agrobacterium fabrum (strain C58 / ATCC 33970)</name>
    <name type="common">Agrobacterium tumefaciens (strain C58)</name>
    <dbReference type="NCBI Taxonomy" id="176299"/>
    <lineage>
        <taxon>Bacteria</taxon>
        <taxon>Pseudomonadati</taxon>
        <taxon>Pseudomonadota</taxon>
        <taxon>Alphaproteobacteria</taxon>
        <taxon>Hyphomicrobiales</taxon>
        <taxon>Rhizobiaceae</taxon>
        <taxon>Rhizobium/Agrobacterium group</taxon>
        <taxon>Agrobacterium</taxon>
        <taxon>Agrobacterium tumefaciens complex</taxon>
    </lineage>
</organism>
<gene>
    <name evidence="1" type="primary">rpiA</name>
    <name type="ordered locus">Atu1613</name>
    <name type="ORF">AGR_C_2972</name>
</gene>
<sequence>MDARQMKIKAAEAALSHVQDGMRLGIGTGSTAEEFVRLLAEKVAAGLKVEGVPTSERTARLCVELGVPLKSLDELPELDLTIDGADEVDHVLRLVKGGGGALLREKIVAAASGRMIVIADQSKVVETLGAFPLPIEINPFGQVATRIAIEKLAARSGLSGELTMRSSGDGAFMTDGGHLILDASFGRIPDAEALARELNTIPGVVEHGLFINLASLAIIAGPEGARMMQAV</sequence>
<protein>
    <recommendedName>
        <fullName evidence="1">Ribose-5-phosphate isomerase A</fullName>
        <ecNumber evidence="1">5.3.1.6</ecNumber>
    </recommendedName>
    <alternativeName>
        <fullName evidence="1">Phosphoriboisomerase A</fullName>
        <shortName evidence="1">PRI</shortName>
    </alternativeName>
</protein>
<accession>Q8UEZ0</accession>
<dbReference type="EC" id="5.3.1.6" evidence="1"/>
<dbReference type="EMBL" id="AE007869">
    <property type="protein sequence ID" value="AAK87392.2"/>
    <property type="status" value="ALT_INIT"/>
    <property type="molecule type" value="Genomic_DNA"/>
</dbReference>
<dbReference type="PIR" id="AI2774">
    <property type="entry name" value="AI2774"/>
</dbReference>
<dbReference type="PIR" id="G97554">
    <property type="entry name" value="G97554"/>
</dbReference>
<dbReference type="RefSeq" id="NP_354607.2">
    <property type="nucleotide sequence ID" value="NC_003062.2"/>
</dbReference>
<dbReference type="RefSeq" id="WP_035258577.1">
    <property type="nucleotide sequence ID" value="NC_003062.2"/>
</dbReference>
<dbReference type="SMR" id="Q8UEZ0"/>
<dbReference type="STRING" id="176299.Atu1613"/>
<dbReference type="EnsemblBacteria" id="AAK87392">
    <property type="protein sequence ID" value="AAK87392"/>
    <property type="gene ID" value="Atu1613"/>
</dbReference>
<dbReference type="GeneID" id="1133651"/>
<dbReference type="KEGG" id="atu:Atu1613"/>
<dbReference type="PATRIC" id="fig|176299.10.peg.1631"/>
<dbReference type="eggNOG" id="COG0120">
    <property type="taxonomic scope" value="Bacteria"/>
</dbReference>
<dbReference type="HOGENOM" id="CLU_056590_1_0_5"/>
<dbReference type="OrthoDB" id="5870696at2"/>
<dbReference type="UniPathway" id="UPA00115">
    <property type="reaction ID" value="UER00412"/>
</dbReference>
<dbReference type="Proteomes" id="UP000000813">
    <property type="component" value="Chromosome circular"/>
</dbReference>
<dbReference type="GO" id="GO:0004751">
    <property type="term" value="F:ribose-5-phosphate isomerase activity"/>
    <property type="evidence" value="ECO:0007669"/>
    <property type="project" value="UniProtKB-UniRule"/>
</dbReference>
<dbReference type="GO" id="GO:0009052">
    <property type="term" value="P:pentose-phosphate shunt, non-oxidative branch"/>
    <property type="evidence" value="ECO:0007669"/>
    <property type="project" value="UniProtKB-UniRule"/>
</dbReference>
<dbReference type="CDD" id="cd01398">
    <property type="entry name" value="RPI_A"/>
    <property type="match status" value="1"/>
</dbReference>
<dbReference type="FunFam" id="3.40.50.1360:FF:000001">
    <property type="entry name" value="Ribose-5-phosphate isomerase A"/>
    <property type="match status" value="1"/>
</dbReference>
<dbReference type="Gene3D" id="3.30.70.260">
    <property type="match status" value="1"/>
</dbReference>
<dbReference type="Gene3D" id="3.40.50.1360">
    <property type="match status" value="1"/>
</dbReference>
<dbReference type="HAMAP" id="MF_00170">
    <property type="entry name" value="Rib_5P_isom_A"/>
    <property type="match status" value="1"/>
</dbReference>
<dbReference type="InterPro" id="IPR037171">
    <property type="entry name" value="NagB/RpiA_transferase-like"/>
</dbReference>
<dbReference type="InterPro" id="IPR050262">
    <property type="entry name" value="Ribose-5P_isomerase"/>
</dbReference>
<dbReference type="InterPro" id="IPR020672">
    <property type="entry name" value="Ribose5P_isomerase_typA_subgr"/>
</dbReference>
<dbReference type="InterPro" id="IPR004788">
    <property type="entry name" value="Ribose5P_isomerase_type_A"/>
</dbReference>
<dbReference type="NCBIfam" id="NF001924">
    <property type="entry name" value="PRK00702.1"/>
    <property type="match status" value="1"/>
</dbReference>
<dbReference type="NCBIfam" id="TIGR00021">
    <property type="entry name" value="rpiA"/>
    <property type="match status" value="1"/>
</dbReference>
<dbReference type="PANTHER" id="PTHR43748">
    <property type="entry name" value="RIBOSE-5-PHOSPHATE ISOMERASE 3, CHLOROPLASTIC-RELATED"/>
    <property type="match status" value="1"/>
</dbReference>
<dbReference type="PANTHER" id="PTHR43748:SF3">
    <property type="entry name" value="RIBOSE-5-PHOSPHATE ISOMERASE 3, CHLOROPLASTIC-RELATED"/>
    <property type="match status" value="1"/>
</dbReference>
<dbReference type="Pfam" id="PF06026">
    <property type="entry name" value="Rib_5-P_isom_A"/>
    <property type="match status" value="1"/>
</dbReference>
<dbReference type="SUPFAM" id="SSF75445">
    <property type="entry name" value="D-ribose-5-phosphate isomerase (RpiA), lid domain"/>
    <property type="match status" value="1"/>
</dbReference>
<dbReference type="SUPFAM" id="SSF100950">
    <property type="entry name" value="NagB/RpiA/CoA transferase-like"/>
    <property type="match status" value="1"/>
</dbReference>
<name>RPIA_AGRFC</name>
<comment type="function">
    <text evidence="1">Catalyzes the reversible conversion of ribose-5-phosphate to ribulose 5-phosphate.</text>
</comment>
<comment type="catalytic activity">
    <reaction evidence="1">
        <text>aldehydo-D-ribose 5-phosphate = D-ribulose 5-phosphate</text>
        <dbReference type="Rhea" id="RHEA:14657"/>
        <dbReference type="ChEBI" id="CHEBI:58121"/>
        <dbReference type="ChEBI" id="CHEBI:58273"/>
        <dbReference type="EC" id="5.3.1.6"/>
    </reaction>
</comment>
<comment type="pathway">
    <text evidence="1">Carbohydrate degradation; pentose phosphate pathway; D-ribose 5-phosphate from D-ribulose 5-phosphate (non-oxidative stage): step 1/1.</text>
</comment>
<comment type="subunit">
    <text evidence="1">Homodimer.</text>
</comment>
<comment type="similarity">
    <text evidence="1">Belongs to the ribose 5-phosphate isomerase family.</text>
</comment>
<comment type="sequence caution" evidence="2">
    <conflict type="erroneous initiation">
        <sequence resource="EMBL-CDS" id="AAK87392"/>
    </conflict>
</comment>
<keyword id="KW-0413">Isomerase</keyword>
<keyword id="KW-1185">Reference proteome</keyword>
<evidence type="ECO:0000255" key="1">
    <source>
        <dbReference type="HAMAP-Rule" id="MF_00170"/>
    </source>
</evidence>
<evidence type="ECO:0000305" key="2"/>
<proteinExistence type="inferred from homology"/>
<reference key="1">
    <citation type="journal article" date="2001" name="Science">
        <title>The genome of the natural genetic engineer Agrobacterium tumefaciens C58.</title>
        <authorList>
            <person name="Wood D.W."/>
            <person name="Setubal J.C."/>
            <person name="Kaul R."/>
            <person name="Monks D.E."/>
            <person name="Kitajima J.P."/>
            <person name="Okura V.K."/>
            <person name="Zhou Y."/>
            <person name="Chen L."/>
            <person name="Wood G.E."/>
            <person name="Almeida N.F. Jr."/>
            <person name="Woo L."/>
            <person name="Chen Y."/>
            <person name="Paulsen I.T."/>
            <person name="Eisen J.A."/>
            <person name="Karp P.D."/>
            <person name="Bovee D. Sr."/>
            <person name="Chapman P."/>
            <person name="Clendenning J."/>
            <person name="Deatherage G."/>
            <person name="Gillet W."/>
            <person name="Grant C."/>
            <person name="Kutyavin T."/>
            <person name="Levy R."/>
            <person name="Li M.-J."/>
            <person name="McClelland E."/>
            <person name="Palmieri A."/>
            <person name="Raymond C."/>
            <person name="Rouse G."/>
            <person name="Saenphimmachak C."/>
            <person name="Wu Z."/>
            <person name="Romero P."/>
            <person name="Gordon D."/>
            <person name="Zhang S."/>
            <person name="Yoo H."/>
            <person name="Tao Y."/>
            <person name="Biddle P."/>
            <person name="Jung M."/>
            <person name="Krespan W."/>
            <person name="Perry M."/>
            <person name="Gordon-Kamm B."/>
            <person name="Liao L."/>
            <person name="Kim S."/>
            <person name="Hendrick C."/>
            <person name="Zhao Z.-Y."/>
            <person name="Dolan M."/>
            <person name="Chumley F."/>
            <person name="Tingey S.V."/>
            <person name="Tomb J.-F."/>
            <person name="Gordon M.P."/>
            <person name="Olson M.V."/>
            <person name="Nester E.W."/>
        </authorList>
    </citation>
    <scope>NUCLEOTIDE SEQUENCE [LARGE SCALE GENOMIC DNA]</scope>
    <source>
        <strain>C58 / ATCC 33970</strain>
    </source>
</reference>
<reference key="2">
    <citation type="journal article" date="2001" name="Science">
        <title>Genome sequence of the plant pathogen and biotechnology agent Agrobacterium tumefaciens C58.</title>
        <authorList>
            <person name="Goodner B."/>
            <person name="Hinkle G."/>
            <person name="Gattung S."/>
            <person name="Miller N."/>
            <person name="Blanchard M."/>
            <person name="Qurollo B."/>
            <person name="Goldman B.S."/>
            <person name="Cao Y."/>
            <person name="Askenazi M."/>
            <person name="Halling C."/>
            <person name="Mullin L."/>
            <person name="Houmiel K."/>
            <person name="Gordon J."/>
            <person name="Vaudin M."/>
            <person name="Iartchouk O."/>
            <person name="Epp A."/>
            <person name="Liu F."/>
            <person name="Wollam C."/>
            <person name="Allinger M."/>
            <person name="Doughty D."/>
            <person name="Scott C."/>
            <person name="Lappas C."/>
            <person name="Markelz B."/>
            <person name="Flanagan C."/>
            <person name="Crowell C."/>
            <person name="Gurson J."/>
            <person name="Lomo C."/>
            <person name="Sear C."/>
            <person name="Strub G."/>
            <person name="Cielo C."/>
            <person name="Slater S."/>
        </authorList>
    </citation>
    <scope>NUCLEOTIDE SEQUENCE [LARGE SCALE GENOMIC DNA]</scope>
    <source>
        <strain>C58 / ATCC 33970</strain>
    </source>
</reference>
<feature type="chain" id="PRO_0000158379" description="Ribose-5-phosphate isomerase A">
    <location>
        <begin position="1"/>
        <end position="231"/>
    </location>
</feature>
<feature type="active site" description="Proton acceptor" evidence="1">
    <location>
        <position position="105"/>
    </location>
</feature>
<feature type="binding site" evidence="1">
    <location>
        <begin position="28"/>
        <end position="31"/>
    </location>
    <ligand>
        <name>substrate</name>
    </ligand>
</feature>
<feature type="binding site" evidence="1">
    <location>
        <begin position="83"/>
        <end position="86"/>
    </location>
    <ligand>
        <name>substrate</name>
    </ligand>
</feature>
<feature type="binding site" evidence="1">
    <location>
        <begin position="96"/>
        <end position="99"/>
    </location>
    <ligand>
        <name>substrate</name>
    </ligand>
</feature>
<feature type="binding site" evidence="1">
    <location>
        <position position="123"/>
    </location>
    <ligand>
        <name>substrate</name>
    </ligand>
</feature>